<proteinExistence type="inferred from homology"/>
<organism>
    <name type="scientific">Thermus thermophilus (strain ATCC 27634 / DSM 579 / HB8)</name>
    <dbReference type="NCBI Taxonomy" id="300852"/>
    <lineage>
        <taxon>Bacteria</taxon>
        <taxon>Thermotogati</taxon>
        <taxon>Deinococcota</taxon>
        <taxon>Deinococci</taxon>
        <taxon>Thermales</taxon>
        <taxon>Thermaceae</taxon>
        <taxon>Thermus</taxon>
    </lineage>
</organism>
<reference key="1">
    <citation type="submission" date="2004-11" db="EMBL/GenBank/DDBJ databases">
        <title>Complete genome sequence of Thermus thermophilus HB8.</title>
        <authorList>
            <person name="Masui R."/>
            <person name="Kurokawa K."/>
            <person name="Nakagawa N."/>
            <person name="Tokunaga F."/>
            <person name="Koyama Y."/>
            <person name="Shibata T."/>
            <person name="Oshima T."/>
            <person name="Yokoyama S."/>
            <person name="Yasunaga T."/>
            <person name="Kuramitsu S."/>
        </authorList>
    </citation>
    <scope>NUCLEOTIDE SEQUENCE [LARGE SCALE GENOMIC DNA]</scope>
    <source>
        <strain>ATCC 27634 / DSM 579 / HB8</strain>
    </source>
</reference>
<keyword id="KW-0067">ATP-binding</keyword>
<keyword id="KW-0131">Cell cycle</keyword>
<keyword id="KW-0132">Cell division</keyword>
<keyword id="KW-0133">Cell shape</keyword>
<keyword id="KW-0961">Cell wall biogenesis/degradation</keyword>
<keyword id="KW-0963">Cytoplasm</keyword>
<keyword id="KW-0436">Ligase</keyword>
<keyword id="KW-0547">Nucleotide-binding</keyword>
<keyword id="KW-0573">Peptidoglycan synthesis</keyword>
<keyword id="KW-1185">Reference proteome</keyword>
<gene>
    <name evidence="1" type="primary">murD</name>
    <name type="ordered locus">TTHA1082</name>
</gene>
<sequence length="417" mass="45323">MRLVYGLGRSGLGVLRFLRKRGLPARFYDDRPREEEVREALALGFQPDWNLEEAYEEVVAAPGVPLDHPHLKRLAARGAKVLGEAELAYRLSPTPIVGITGTAGKTSTTLFTAHLLRAHGLRAREGGNVDPPLVSVVDEAEVAVAELSSFQLERVHAFRPRVAVLLNLGVDHLDRHGTVEAYHAAKLNLLKNLTPEDALVYNRLDPKVRRAAEASPARLYPFTPGSTPRETNLRAALEATRAYLDLLGRPLDPGAVAEALRTLPEAPHRFQAFARKGGVVFIDDSIATRTEAVRAALEAAPAPIAWILGGEDKGADLAPLLPLLGRVRVALALGRDGPRFARALEGRTEVVVIAEKDGRTAMRKAVEEALSRLEQGSVLLAPLAASFDQFRDYKDRAQAFREAVFALGGEPWTPSSS</sequence>
<comment type="function">
    <text evidence="1">Cell wall formation. Catalyzes the addition of glutamate to the nucleotide precursor UDP-N-acetylmuramoyl-L-alanine (UMA).</text>
</comment>
<comment type="catalytic activity">
    <reaction evidence="1">
        <text>UDP-N-acetyl-alpha-D-muramoyl-L-alanine + D-glutamate + ATP = UDP-N-acetyl-alpha-D-muramoyl-L-alanyl-D-glutamate + ADP + phosphate + H(+)</text>
        <dbReference type="Rhea" id="RHEA:16429"/>
        <dbReference type="ChEBI" id="CHEBI:15378"/>
        <dbReference type="ChEBI" id="CHEBI:29986"/>
        <dbReference type="ChEBI" id="CHEBI:30616"/>
        <dbReference type="ChEBI" id="CHEBI:43474"/>
        <dbReference type="ChEBI" id="CHEBI:83898"/>
        <dbReference type="ChEBI" id="CHEBI:83900"/>
        <dbReference type="ChEBI" id="CHEBI:456216"/>
        <dbReference type="EC" id="6.3.2.9"/>
    </reaction>
</comment>
<comment type="pathway">
    <text evidence="1">Cell wall biogenesis; peptidoglycan biosynthesis.</text>
</comment>
<comment type="subcellular location">
    <subcellularLocation>
        <location evidence="1">Cytoplasm</location>
    </subcellularLocation>
</comment>
<comment type="similarity">
    <text evidence="1">Belongs to the MurCDEF family.</text>
</comment>
<name>MURD_THET8</name>
<evidence type="ECO:0000255" key="1">
    <source>
        <dbReference type="HAMAP-Rule" id="MF_00639"/>
    </source>
</evidence>
<accession>Q5SJD2</accession>
<feature type="chain" id="PRO_0000109115" description="UDP-N-acetylmuramoylalanine--D-glutamate ligase">
    <location>
        <begin position="1"/>
        <end position="417"/>
    </location>
</feature>
<feature type="binding site" evidence="1">
    <location>
        <begin position="101"/>
        <end position="107"/>
    </location>
    <ligand>
        <name>ATP</name>
        <dbReference type="ChEBI" id="CHEBI:30616"/>
    </ligand>
</feature>
<dbReference type="EC" id="6.3.2.9" evidence="1"/>
<dbReference type="EMBL" id="AP008226">
    <property type="protein sequence ID" value="BAD70905.1"/>
    <property type="molecule type" value="Genomic_DNA"/>
</dbReference>
<dbReference type="RefSeq" id="WP_011173156.1">
    <property type="nucleotide sequence ID" value="NC_006461.1"/>
</dbReference>
<dbReference type="RefSeq" id="YP_144348.1">
    <property type="nucleotide sequence ID" value="NC_006461.1"/>
</dbReference>
<dbReference type="SMR" id="Q5SJD2"/>
<dbReference type="EnsemblBacteria" id="BAD70905">
    <property type="protein sequence ID" value="BAD70905"/>
    <property type="gene ID" value="BAD70905"/>
</dbReference>
<dbReference type="GeneID" id="3169030"/>
<dbReference type="KEGG" id="ttj:TTHA1082"/>
<dbReference type="PATRIC" id="fig|300852.9.peg.1062"/>
<dbReference type="eggNOG" id="COG0771">
    <property type="taxonomic scope" value="Bacteria"/>
</dbReference>
<dbReference type="HOGENOM" id="CLU_032540_0_0_0"/>
<dbReference type="PhylomeDB" id="Q5SJD2"/>
<dbReference type="UniPathway" id="UPA00219"/>
<dbReference type="Proteomes" id="UP000000532">
    <property type="component" value="Chromosome"/>
</dbReference>
<dbReference type="GO" id="GO:0005737">
    <property type="term" value="C:cytoplasm"/>
    <property type="evidence" value="ECO:0007669"/>
    <property type="project" value="UniProtKB-SubCell"/>
</dbReference>
<dbReference type="GO" id="GO:0005524">
    <property type="term" value="F:ATP binding"/>
    <property type="evidence" value="ECO:0007669"/>
    <property type="project" value="UniProtKB-UniRule"/>
</dbReference>
<dbReference type="GO" id="GO:0008764">
    <property type="term" value="F:UDP-N-acetylmuramoylalanine-D-glutamate ligase activity"/>
    <property type="evidence" value="ECO:0007669"/>
    <property type="project" value="UniProtKB-UniRule"/>
</dbReference>
<dbReference type="GO" id="GO:0051301">
    <property type="term" value="P:cell division"/>
    <property type="evidence" value="ECO:0007669"/>
    <property type="project" value="UniProtKB-KW"/>
</dbReference>
<dbReference type="GO" id="GO:0071555">
    <property type="term" value="P:cell wall organization"/>
    <property type="evidence" value="ECO:0007669"/>
    <property type="project" value="UniProtKB-KW"/>
</dbReference>
<dbReference type="GO" id="GO:0009252">
    <property type="term" value="P:peptidoglycan biosynthetic process"/>
    <property type="evidence" value="ECO:0007669"/>
    <property type="project" value="UniProtKB-UniRule"/>
</dbReference>
<dbReference type="GO" id="GO:0008360">
    <property type="term" value="P:regulation of cell shape"/>
    <property type="evidence" value="ECO:0007669"/>
    <property type="project" value="UniProtKB-KW"/>
</dbReference>
<dbReference type="Gene3D" id="3.90.190.20">
    <property type="entry name" value="Mur ligase, C-terminal domain"/>
    <property type="match status" value="1"/>
</dbReference>
<dbReference type="Gene3D" id="3.40.1190.10">
    <property type="entry name" value="Mur-like, catalytic domain"/>
    <property type="match status" value="1"/>
</dbReference>
<dbReference type="Gene3D" id="3.40.50.720">
    <property type="entry name" value="NAD(P)-binding Rossmann-like Domain"/>
    <property type="match status" value="1"/>
</dbReference>
<dbReference type="HAMAP" id="MF_00639">
    <property type="entry name" value="MurD"/>
    <property type="match status" value="1"/>
</dbReference>
<dbReference type="InterPro" id="IPR036565">
    <property type="entry name" value="Mur-like_cat_sf"/>
</dbReference>
<dbReference type="InterPro" id="IPR004101">
    <property type="entry name" value="Mur_ligase_C"/>
</dbReference>
<dbReference type="InterPro" id="IPR036615">
    <property type="entry name" value="Mur_ligase_C_dom_sf"/>
</dbReference>
<dbReference type="InterPro" id="IPR013221">
    <property type="entry name" value="Mur_ligase_cen"/>
</dbReference>
<dbReference type="InterPro" id="IPR005762">
    <property type="entry name" value="MurD"/>
</dbReference>
<dbReference type="NCBIfam" id="TIGR01087">
    <property type="entry name" value="murD"/>
    <property type="match status" value="1"/>
</dbReference>
<dbReference type="PANTHER" id="PTHR43692">
    <property type="entry name" value="UDP-N-ACETYLMURAMOYLALANINE--D-GLUTAMATE LIGASE"/>
    <property type="match status" value="1"/>
</dbReference>
<dbReference type="PANTHER" id="PTHR43692:SF1">
    <property type="entry name" value="UDP-N-ACETYLMURAMOYLALANINE--D-GLUTAMATE LIGASE"/>
    <property type="match status" value="1"/>
</dbReference>
<dbReference type="Pfam" id="PF02875">
    <property type="entry name" value="Mur_ligase_C"/>
    <property type="match status" value="1"/>
</dbReference>
<dbReference type="Pfam" id="PF08245">
    <property type="entry name" value="Mur_ligase_M"/>
    <property type="match status" value="1"/>
</dbReference>
<dbReference type="Pfam" id="PF21799">
    <property type="entry name" value="MurD-like_N"/>
    <property type="match status" value="1"/>
</dbReference>
<dbReference type="SUPFAM" id="SSF51984">
    <property type="entry name" value="MurCD N-terminal domain"/>
    <property type="match status" value="1"/>
</dbReference>
<dbReference type="SUPFAM" id="SSF53623">
    <property type="entry name" value="MurD-like peptide ligases, catalytic domain"/>
    <property type="match status" value="1"/>
</dbReference>
<dbReference type="SUPFAM" id="SSF53244">
    <property type="entry name" value="MurD-like peptide ligases, peptide-binding domain"/>
    <property type="match status" value="1"/>
</dbReference>
<protein>
    <recommendedName>
        <fullName evidence="1">UDP-N-acetylmuramoylalanine--D-glutamate ligase</fullName>
        <ecNumber evidence="1">6.3.2.9</ecNumber>
    </recommendedName>
    <alternativeName>
        <fullName evidence="1">D-glutamic acid-adding enzyme</fullName>
    </alternativeName>
    <alternativeName>
        <fullName evidence="1">UDP-N-acetylmuramoyl-L-alanyl-D-glutamate synthetase</fullName>
    </alternativeName>
</protein>